<accession>Q99V37</accession>
<dbReference type="EC" id="1.10.3.-"/>
<dbReference type="EMBL" id="BA000017">
    <property type="protein sequence ID" value="BAB57222.1"/>
    <property type="molecule type" value="Genomic_DNA"/>
</dbReference>
<dbReference type="RefSeq" id="WP_001010762.1">
    <property type="nucleotide sequence ID" value="NC_002758.2"/>
</dbReference>
<dbReference type="SMR" id="Q99V37"/>
<dbReference type="KEGG" id="sav:SAV1060"/>
<dbReference type="HOGENOM" id="CLU_011899_7_1_9"/>
<dbReference type="PhylomeDB" id="Q99V37"/>
<dbReference type="UniPathway" id="UPA00705"/>
<dbReference type="Proteomes" id="UP000002481">
    <property type="component" value="Chromosome"/>
</dbReference>
<dbReference type="GO" id="GO:0005886">
    <property type="term" value="C:plasma membrane"/>
    <property type="evidence" value="ECO:0007669"/>
    <property type="project" value="UniProtKB-SubCell"/>
</dbReference>
<dbReference type="GO" id="GO:0005507">
    <property type="term" value="F:copper ion binding"/>
    <property type="evidence" value="ECO:0007669"/>
    <property type="project" value="InterPro"/>
</dbReference>
<dbReference type="GO" id="GO:0004129">
    <property type="term" value="F:cytochrome-c oxidase activity"/>
    <property type="evidence" value="ECO:0007669"/>
    <property type="project" value="InterPro"/>
</dbReference>
<dbReference type="GO" id="GO:0020037">
    <property type="term" value="F:heme binding"/>
    <property type="evidence" value="ECO:0007669"/>
    <property type="project" value="InterPro"/>
</dbReference>
<dbReference type="GO" id="GO:0016682">
    <property type="term" value="F:oxidoreductase activity, acting on diphenols and related substances as donors, oxygen as acceptor"/>
    <property type="evidence" value="ECO:0007669"/>
    <property type="project" value="InterPro"/>
</dbReference>
<dbReference type="GO" id="GO:0015990">
    <property type="term" value="P:electron transport coupled proton transport"/>
    <property type="evidence" value="ECO:0007669"/>
    <property type="project" value="TreeGrafter"/>
</dbReference>
<dbReference type="GO" id="GO:0006119">
    <property type="term" value="P:oxidative phosphorylation"/>
    <property type="evidence" value="ECO:0007669"/>
    <property type="project" value="UniProtKB-UniPathway"/>
</dbReference>
<dbReference type="GO" id="GO:0022904">
    <property type="term" value="P:respiratory electron transport chain"/>
    <property type="evidence" value="ECO:0007669"/>
    <property type="project" value="TreeGrafter"/>
</dbReference>
<dbReference type="CDD" id="cd01662">
    <property type="entry name" value="Ubiquinol_Oxidase_I"/>
    <property type="match status" value="1"/>
</dbReference>
<dbReference type="FunFam" id="1.20.210.10:FF:000002">
    <property type="entry name" value="Cytochrome o ubiquinol oxidase, subunit I"/>
    <property type="match status" value="1"/>
</dbReference>
<dbReference type="Gene3D" id="1.20.210.10">
    <property type="entry name" value="Cytochrome c oxidase-like, subunit I domain"/>
    <property type="match status" value="1"/>
</dbReference>
<dbReference type="InterPro" id="IPR023616">
    <property type="entry name" value="Cyt_c_oxase-like_su1_dom"/>
</dbReference>
<dbReference type="InterPro" id="IPR036927">
    <property type="entry name" value="Cyt_c_oxase-like_su1_sf"/>
</dbReference>
<dbReference type="InterPro" id="IPR000883">
    <property type="entry name" value="Cyt_C_Oxase_1"/>
</dbReference>
<dbReference type="InterPro" id="IPR023615">
    <property type="entry name" value="Cyt_c_Oxase_su1_BS"/>
</dbReference>
<dbReference type="InterPro" id="IPR014233">
    <property type="entry name" value="QoxB"/>
</dbReference>
<dbReference type="NCBIfam" id="TIGR02882">
    <property type="entry name" value="QoxB"/>
    <property type="match status" value="1"/>
</dbReference>
<dbReference type="PANTHER" id="PTHR10422:SF35">
    <property type="entry name" value="CYTOCHROME BO(3) UBIQUINOL OXIDASE SUBUNIT 1"/>
    <property type="match status" value="1"/>
</dbReference>
<dbReference type="PANTHER" id="PTHR10422">
    <property type="entry name" value="CYTOCHROME C OXIDASE SUBUNIT 1"/>
    <property type="match status" value="1"/>
</dbReference>
<dbReference type="Pfam" id="PF00115">
    <property type="entry name" value="COX1"/>
    <property type="match status" value="1"/>
</dbReference>
<dbReference type="PRINTS" id="PR01165">
    <property type="entry name" value="CYCOXIDASEI"/>
</dbReference>
<dbReference type="SUPFAM" id="SSF81442">
    <property type="entry name" value="Cytochrome c oxidase subunit I-like"/>
    <property type="match status" value="1"/>
</dbReference>
<dbReference type="PROSITE" id="PS50855">
    <property type="entry name" value="COX1"/>
    <property type="match status" value="1"/>
</dbReference>
<dbReference type="PROSITE" id="PS00077">
    <property type="entry name" value="COX1_CUB"/>
    <property type="match status" value="1"/>
</dbReference>
<proteinExistence type="inferred from homology"/>
<keyword id="KW-1003">Cell membrane</keyword>
<keyword id="KW-0186">Copper</keyword>
<keyword id="KW-0249">Electron transport</keyword>
<keyword id="KW-0349">Heme</keyword>
<keyword id="KW-0375">Hydrogen ion transport</keyword>
<keyword id="KW-0406">Ion transport</keyword>
<keyword id="KW-0408">Iron</keyword>
<keyword id="KW-0472">Membrane</keyword>
<keyword id="KW-0479">Metal-binding</keyword>
<keyword id="KW-0560">Oxidoreductase</keyword>
<keyword id="KW-0679">Respiratory chain</keyword>
<keyword id="KW-0812">Transmembrane</keyword>
<keyword id="KW-1133">Transmembrane helix</keyword>
<keyword id="KW-0813">Transport</keyword>
<comment type="function">
    <text evidence="1">Catalyzes quinol oxidation with the concomitant reduction of oxygen to water.</text>
</comment>
<comment type="catalytic activity">
    <reaction>
        <text>2 a quinol + O2 = 2 a quinone + 2 H2O</text>
        <dbReference type="Rhea" id="RHEA:55376"/>
        <dbReference type="ChEBI" id="CHEBI:15377"/>
        <dbReference type="ChEBI" id="CHEBI:15379"/>
        <dbReference type="ChEBI" id="CHEBI:24646"/>
        <dbReference type="ChEBI" id="CHEBI:132124"/>
    </reaction>
</comment>
<comment type="cofactor">
    <cofactor evidence="1">
        <name>Cu cation</name>
        <dbReference type="ChEBI" id="CHEBI:23378"/>
    </cofactor>
    <text evidence="1">Binds a copper B center.</text>
</comment>
<comment type="cofactor">
    <cofactor evidence="1">
        <name>ferriheme a</name>
        <dbReference type="ChEBI" id="CHEBI:60532"/>
    </cofactor>
</comment>
<comment type="cofactor">
    <text evidence="1">Heme A3.</text>
</comment>
<comment type="pathway">
    <text>Energy metabolism; oxidative phosphorylation.</text>
</comment>
<comment type="subcellular location">
    <subcellularLocation>
        <location evidence="1">Cell membrane</location>
        <topology evidence="1">Multi-pass membrane protein</topology>
    </subcellularLocation>
</comment>
<comment type="similarity">
    <text evidence="3">Belongs to the heme-copper respiratory oxidase family.</text>
</comment>
<protein>
    <recommendedName>
        <fullName>Probable quinol oxidase subunit 1</fullName>
        <ecNumber>1.10.3.-</ecNumber>
    </recommendedName>
    <alternativeName>
        <fullName>Quinol oxidase polypeptide I</fullName>
    </alternativeName>
</protein>
<gene>
    <name type="primary">qoxB</name>
    <name type="ordered locus">SAV1060</name>
</gene>
<name>QOX1_STAAM</name>
<organism>
    <name type="scientific">Staphylococcus aureus (strain Mu50 / ATCC 700699)</name>
    <dbReference type="NCBI Taxonomy" id="158878"/>
    <lineage>
        <taxon>Bacteria</taxon>
        <taxon>Bacillati</taxon>
        <taxon>Bacillota</taxon>
        <taxon>Bacilli</taxon>
        <taxon>Bacillales</taxon>
        <taxon>Staphylococcaceae</taxon>
        <taxon>Staphylococcus</taxon>
    </lineage>
</organism>
<feature type="chain" id="PRO_0000276745" description="Probable quinol oxidase subunit 1">
    <location>
        <begin position="1"/>
        <end position="662"/>
    </location>
</feature>
<feature type="transmembrane region" description="Helical" evidence="2">
    <location>
        <begin position="14"/>
        <end position="34"/>
    </location>
</feature>
<feature type="transmembrane region" description="Helical" evidence="2">
    <location>
        <begin position="58"/>
        <end position="78"/>
    </location>
</feature>
<feature type="transmembrane region" description="Helical" evidence="2">
    <location>
        <begin position="103"/>
        <end position="123"/>
    </location>
</feature>
<feature type="transmembrane region" description="Helical" evidence="2">
    <location>
        <begin position="140"/>
        <end position="160"/>
    </location>
</feature>
<feature type="transmembrane region" description="Helical" evidence="2">
    <location>
        <begin position="187"/>
        <end position="207"/>
    </location>
</feature>
<feature type="transmembrane region" description="Helical" evidence="2">
    <location>
        <begin position="228"/>
        <end position="248"/>
    </location>
</feature>
<feature type="transmembrane region" description="Helical" evidence="2">
    <location>
        <begin position="273"/>
        <end position="293"/>
    </location>
</feature>
<feature type="transmembrane region" description="Helical" evidence="2">
    <location>
        <begin position="311"/>
        <end position="331"/>
    </location>
</feature>
<feature type="transmembrane region" description="Helical" evidence="2">
    <location>
        <begin position="336"/>
        <end position="356"/>
    </location>
</feature>
<feature type="transmembrane region" description="Helical" evidence="2">
    <location>
        <begin position="376"/>
        <end position="396"/>
    </location>
</feature>
<feature type="transmembrane region" description="Helical" evidence="2">
    <location>
        <begin position="415"/>
        <end position="435"/>
    </location>
</feature>
<feature type="transmembrane region" description="Helical" evidence="2">
    <location>
        <begin position="451"/>
        <end position="471"/>
    </location>
</feature>
<feature type="transmembrane region" description="Helical" evidence="2">
    <location>
        <begin position="493"/>
        <end position="513"/>
    </location>
</feature>
<feature type="transmembrane region" description="Helical" evidence="2">
    <location>
        <begin position="587"/>
        <end position="604"/>
    </location>
</feature>
<feature type="transmembrane region" description="Helical" evidence="2">
    <location>
        <begin position="608"/>
        <end position="627"/>
    </location>
</feature>
<feature type="binding site" description="axial binding residue" evidence="1">
    <location>
        <position position="102"/>
    </location>
    <ligand>
        <name>Fe(II)-heme a</name>
        <dbReference type="ChEBI" id="CHEBI:61715"/>
    </ligand>
    <ligandPart>
        <name>Fe</name>
        <dbReference type="ChEBI" id="CHEBI:18248"/>
    </ligandPart>
</feature>
<feature type="binding site" evidence="1">
    <location>
        <position position="279"/>
    </location>
    <ligand>
        <name>Cu cation</name>
        <dbReference type="ChEBI" id="CHEBI:23378"/>
        <label>B</label>
    </ligand>
</feature>
<feature type="binding site" evidence="1">
    <location>
        <position position="283"/>
    </location>
    <ligand>
        <name>Cu cation</name>
        <dbReference type="ChEBI" id="CHEBI:23378"/>
        <label>B</label>
    </ligand>
</feature>
<feature type="binding site" evidence="1">
    <location>
        <position position="328"/>
    </location>
    <ligand>
        <name>Cu cation</name>
        <dbReference type="ChEBI" id="CHEBI:23378"/>
        <label>B</label>
    </ligand>
</feature>
<feature type="binding site" evidence="1">
    <location>
        <position position="329"/>
    </location>
    <ligand>
        <name>Cu cation</name>
        <dbReference type="ChEBI" id="CHEBI:23378"/>
        <label>B</label>
    </ligand>
</feature>
<feature type="binding site" description="axial binding residue" evidence="1">
    <location>
        <position position="414"/>
    </location>
    <ligand>
        <name>heme a3</name>
        <dbReference type="ChEBI" id="CHEBI:83282"/>
    </ligand>
    <ligandPart>
        <name>Fe</name>
        <dbReference type="ChEBI" id="CHEBI:18248"/>
    </ligandPart>
</feature>
<feature type="binding site" description="axial binding residue" evidence="1">
    <location>
        <position position="416"/>
    </location>
    <ligand>
        <name>Fe(II)-heme a</name>
        <dbReference type="ChEBI" id="CHEBI:61715"/>
    </ligand>
    <ligandPart>
        <name>Fe</name>
        <dbReference type="ChEBI" id="CHEBI:18248"/>
    </ligandPart>
</feature>
<feature type="cross-link" description="1'-histidyl-3'-tyrosine (His-Tyr)" evidence="1">
    <location>
        <begin position="279"/>
        <end position="283"/>
    </location>
</feature>
<evidence type="ECO:0000250" key="1"/>
<evidence type="ECO:0000255" key="2"/>
<evidence type="ECO:0000305" key="3"/>
<reference key="1">
    <citation type="journal article" date="2001" name="Lancet">
        <title>Whole genome sequencing of meticillin-resistant Staphylococcus aureus.</title>
        <authorList>
            <person name="Kuroda M."/>
            <person name="Ohta T."/>
            <person name="Uchiyama I."/>
            <person name="Baba T."/>
            <person name="Yuzawa H."/>
            <person name="Kobayashi I."/>
            <person name="Cui L."/>
            <person name="Oguchi A."/>
            <person name="Aoki K."/>
            <person name="Nagai Y."/>
            <person name="Lian J.-Q."/>
            <person name="Ito T."/>
            <person name="Kanamori M."/>
            <person name="Matsumaru H."/>
            <person name="Maruyama A."/>
            <person name="Murakami H."/>
            <person name="Hosoyama A."/>
            <person name="Mizutani-Ui Y."/>
            <person name="Takahashi N.K."/>
            <person name="Sawano T."/>
            <person name="Inoue R."/>
            <person name="Kaito C."/>
            <person name="Sekimizu K."/>
            <person name="Hirakawa H."/>
            <person name="Kuhara S."/>
            <person name="Goto S."/>
            <person name="Yabuzaki J."/>
            <person name="Kanehisa M."/>
            <person name="Yamashita A."/>
            <person name="Oshima K."/>
            <person name="Furuya K."/>
            <person name="Yoshino C."/>
            <person name="Shiba T."/>
            <person name="Hattori M."/>
            <person name="Ogasawara N."/>
            <person name="Hayashi H."/>
            <person name="Hiramatsu K."/>
        </authorList>
    </citation>
    <scope>NUCLEOTIDE SEQUENCE [LARGE SCALE GENOMIC DNA]</scope>
    <source>
        <strain>Mu50 / ATCC 700699</strain>
    </source>
</reference>
<sequence length="662" mass="75243">MNFPWDQLLVKGNWMITMAQIGAPFLVIGLIAVITYFKLWKYLYKEWFTSVDHKKIGIMYLICAVLMFVRGGIDALLIRAQLTVPDNKFLESNHYNEIFSTHGVIMIIFMAMPFIFGLWNIVVPLQIGARDVAFPVLNNVSFWLFFAGMILFNLSFIIGGSPAAGWTNYAPLAGEFSPGPGVNYYLIAIQISGLGTLATGINFFVTILRCKTPTMKFMQMPMFTVTTFITTLIVILAFPPLTVALALMTTDRIFDTAFFTVAHGGMPMLWANFFWVWGHPEVYIVILPAFGIYSEIIPTFARKRLFGHQSMVWATAGIAFLSFLVWVHHFFTMGNGALINSFFSISTMLIGIPTGVKLFNWLLTLYKGRITFESPMLFSLAFIPNFLLGGVTGVMLAMASADYQYHNTYFLVAHFHYTLVTGVVFACLAGLIFWYPKMMGYKLNETLNKWCFWFFMIGFNVCFLPQFILGLDGMPRRLYTYMPSDGWFLLNLISTIGALLMAIGFLFLVVSIVYSHFKSPREATGDNWDGLGRTLEWTTASAIPPKYNFAITPDWNDYDTFVDMKEHGRHYLDNHNYKDIHMPNNTPVGFWIGIFMTIGGFFLIFETVIPALICLFGIFGTMIYRSFQIDHGYHIPAAEVAETEARLREARIKEREAVSHES</sequence>